<feature type="chain" id="PRO_0000369865" description="Non-structural glycoprotein 4">
    <location>
        <begin position="1"/>
        <end position="213"/>
    </location>
</feature>
<feature type="topological domain" description="Lumenal" evidence="1">
    <location>
        <begin position="1"/>
        <end position="51"/>
    </location>
</feature>
<feature type="transmembrane region" description="Helical; Signal-anchor for type III membrane protein" evidence="1">
    <location>
        <begin position="52"/>
        <end position="74"/>
    </location>
</feature>
<feature type="topological domain" description="Cytoplasmic" evidence="1">
    <location>
        <begin position="75"/>
        <end position="213"/>
    </location>
</feature>
<feature type="glycosylation site" description="N-linked (GlcNAc...) asparagine; by host" evidence="2">
    <location>
        <position position="50"/>
    </location>
</feature>
<keyword id="KW-1072">Activation of host autophagy by virus</keyword>
<keyword id="KW-0260">Enterotoxin</keyword>
<keyword id="KW-0325">Glycoprotein</keyword>
<keyword id="KW-1038">Host endoplasmic reticulum</keyword>
<keyword id="KW-1043">Host membrane</keyword>
<keyword id="KW-0945">Host-virus interaction</keyword>
<keyword id="KW-0407">Ion channel</keyword>
<keyword id="KW-0406">Ion transport</keyword>
<keyword id="KW-0472">Membrane</keyword>
<keyword id="KW-0964">Secreted</keyword>
<keyword id="KW-0735">Signal-anchor</keyword>
<keyword id="KW-0800">Toxin</keyword>
<keyword id="KW-0812">Transmembrane</keyword>
<keyword id="KW-1133">Transmembrane helix</keyword>
<keyword id="KW-0813">Transport</keyword>
<keyword id="KW-1182">Viral ion channel</keyword>
<keyword id="KW-0843">Virulence</keyword>
<accession>A9Q1L1</accession>
<comment type="function">
    <text evidence="1">Plays an essential role in the virus replication cycle by acting as a viroporin. Creates a pore in the host endoplasmic reticulum and as a consequence releases Ca(2+) in the cytoplasm of infected cell. In turn, high levels of cytoplasmic calcium trigger membrane trafficking and transport of viral ER-associated proteins to viroplasms, sites of viral genome replication and immature particle assembly.</text>
</comment>
<comment type="function">
    <text evidence="1">The secreted form acts as an enterotoxin that causes phospholipase C-dependent elevation of the intracellular calcium concentration in host intestinal mucosa cells. Increased concentration of intracellular calcium disrupts the cytoskeleton and the tight junctions, raising the paracellular permeability. Potentiates chloride ion secretion through a calcium ion-dependent signaling pathway, inducing age-dependent diarrhea. To perform this enterotoxigenic role in vivo, NSP4 is released from infected enterocytes in a soluble form capable of diffusing within the intestinal lumen and interacting with host plasma membrane receptors on neighboring epithelial cells such as integrins ITGA1/ITGB1 and ITGA2/ITGB1.</text>
</comment>
<comment type="subunit">
    <text evidence="1">Homotetramer. Interacts with the immature particle in the viroplasm. Interacts with host CAV1, early and late in infection. Interacts with host integrin ITGA1/ITGB1 heterodimer. Interacts with host integrin ITGA2/ITGB1 heterodimer. Interaction with microtubules blocks trafficking to the Golgi apparatus.</text>
</comment>
<comment type="subcellular location">
    <subcellularLocation>
        <location evidence="1">Host rough endoplasmic reticulum membrane</location>
        <topology evidence="1">Single-pass type III membrane protein</topology>
    </subcellularLocation>
    <subcellularLocation>
        <location evidence="1">Host membrane</location>
        <location evidence="1">Host caveola</location>
        <topology evidence="1">Single-pass type III membrane protein</topology>
    </subcellularLocation>
    <subcellularLocation>
        <location evidence="1">Secreted</location>
    </subcellularLocation>
    <text evidence="1">NSP4 also localizes in vesicular structures which contain autophagosomal markers and associate with viroplasms in virus-infected cells. Additionally, a soluble form of glycosylated NSP4 is secreted despite retention of its transmembrane domain.</text>
</comment>
<comment type="PTM">
    <text evidence="1">The N-glycosyl content is primarily Man(9)GlcNAc, with a small amount of Man(8)GlcNAc.</text>
</comment>
<comment type="similarity">
    <text evidence="1">Belongs to the rotavirus NSP4 family.</text>
</comment>
<name>NSP4_ROTB2</name>
<protein>
    <recommendedName>
        <fullName evidence="1">Non-structural glycoprotein 4</fullName>
        <shortName evidence="1">NSP4</shortName>
    </recommendedName>
    <alternativeName>
        <fullName evidence="1">NCVP5</fullName>
    </alternativeName>
    <alternativeName>
        <fullName evidence="1">NS28</fullName>
    </alternativeName>
</protein>
<organismHost>
    <name type="scientific">Homo sapiens</name>
    <name type="common">Human</name>
    <dbReference type="NCBI Taxonomy" id="9606"/>
</organismHost>
<sequence length="213" mass="25265">MEGTSESPILDEFEANSNDYDNEFISRFSQNPLHAFSLFTNGNIQEYFMNNSLEKIIIHIVLIIISLCGIKAQTSKIIYIVRLLFWKMYNVINNLVNKMINREKIADRQIVDNRFREFEERFRILLLQHDENIAKQDNIVQYNKLDNFAESIKSEFNLKVAEMERRFQELKWRCDMIANKTMNTIVLTNTVDSTNKDEKIIFDEGSVVQYNRE</sequence>
<proteinExistence type="evidence at transcript level"/>
<reference key="1">
    <citation type="journal article" date="2008" name="J. Med. Virol.">
        <title>Whole genomic characterization of a human rotavirus strain B219 belonging to a novel group of the genus Rotavirus.</title>
        <authorList>
            <person name="Nagashima S."/>
            <person name="Kobayashi N."/>
            <person name="Ishino M."/>
            <person name="Alam M.M."/>
            <person name="Ahmed M.U."/>
            <person name="Paul S.K."/>
            <person name="Ganesh B."/>
            <person name="Chawla-Sarkar M."/>
            <person name="Krishnan T."/>
            <person name="Naik T.N."/>
            <person name="Wang Y.-H."/>
        </authorList>
    </citation>
    <scope>NUCLEOTIDE SEQUENCE [MRNA]</scope>
</reference>
<organism>
    <name type="scientific">Rotavirus X (isolate RVX/Human/Bangladesh/NADRV-B219/2002/GXP[X])</name>
    <name type="common">RV ADRV-N</name>
    <name type="synonym">Rotavirus (isolate novel adult diarrhea rotavirus-B219)</name>
    <dbReference type="NCBI Taxonomy" id="348136"/>
    <lineage>
        <taxon>Viruses</taxon>
        <taxon>Riboviria</taxon>
        <taxon>Orthornavirae</taxon>
        <taxon>Duplornaviricota</taxon>
        <taxon>Resentoviricetes</taxon>
        <taxon>Reovirales</taxon>
        <taxon>Sedoreoviridae</taxon>
        <taxon>Rotavirus</taxon>
    </lineage>
</organism>
<dbReference type="EMBL" id="EF453359">
    <property type="protein sequence ID" value="ABR32126.1"/>
    <property type="molecule type" value="mRNA"/>
</dbReference>
<dbReference type="SMR" id="A9Q1L1"/>
<dbReference type="Proteomes" id="UP000174021">
    <property type="component" value="Genome"/>
</dbReference>
<dbReference type="GO" id="GO:0005576">
    <property type="term" value="C:extracellular region"/>
    <property type="evidence" value="ECO:0007669"/>
    <property type="project" value="UniProtKB-SubCell"/>
</dbReference>
<dbReference type="GO" id="GO:0044155">
    <property type="term" value="C:host caveola"/>
    <property type="evidence" value="ECO:0007669"/>
    <property type="project" value="UniProtKB-SubCell"/>
</dbReference>
<dbReference type="GO" id="GO:0044169">
    <property type="term" value="C:host cell rough endoplasmic reticulum membrane"/>
    <property type="evidence" value="ECO:0007669"/>
    <property type="project" value="UniProtKB-SubCell"/>
</dbReference>
<dbReference type="GO" id="GO:0016020">
    <property type="term" value="C:membrane"/>
    <property type="evidence" value="ECO:0007669"/>
    <property type="project" value="UniProtKB-UniRule"/>
</dbReference>
<dbReference type="GO" id="GO:0015267">
    <property type="term" value="F:channel activity"/>
    <property type="evidence" value="ECO:0007669"/>
    <property type="project" value="UniProtKB-KW"/>
</dbReference>
<dbReference type="GO" id="GO:0090729">
    <property type="term" value="F:toxin activity"/>
    <property type="evidence" value="ECO:0007669"/>
    <property type="project" value="UniProtKB-UniRule"/>
</dbReference>
<dbReference type="GO" id="GO:0034220">
    <property type="term" value="P:monoatomic ion transmembrane transport"/>
    <property type="evidence" value="ECO:0007669"/>
    <property type="project" value="UniProtKB-KW"/>
</dbReference>
<dbReference type="GO" id="GO:0039520">
    <property type="term" value="P:symbiont-mediated activation of host autophagy"/>
    <property type="evidence" value="ECO:0007669"/>
    <property type="project" value="UniProtKB-KW"/>
</dbReference>
<dbReference type="GO" id="GO:0016032">
    <property type="term" value="P:viral process"/>
    <property type="evidence" value="ECO:0007669"/>
    <property type="project" value="UniProtKB-UniRule"/>
</dbReference>
<dbReference type="HAMAP" id="MF_04091">
    <property type="entry name" value="ROTA_NSP4"/>
    <property type="match status" value="1"/>
</dbReference>
<dbReference type="InterPro" id="IPR002107">
    <property type="entry name" value="Rotavirus_NSP4"/>
</dbReference>
<evidence type="ECO:0000255" key="1">
    <source>
        <dbReference type="HAMAP-Rule" id="MF_04091"/>
    </source>
</evidence>
<evidence type="ECO:0000255" key="2">
    <source>
        <dbReference type="PROSITE-ProRule" id="PRU00498"/>
    </source>
</evidence>